<dbReference type="EC" id="6.1.1.1" evidence="1"/>
<dbReference type="EMBL" id="AP006628">
    <property type="protein sequence ID" value="BAD04554.1"/>
    <property type="molecule type" value="Genomic_DNA"/>
</dbReference>
<dbReference type="SMR" id="Q6YQA6"/>
<dbReference type="STRING" id="262768.PAM_469"/>
<dbReference type="KEGG" id="poy:PAM_469"/>
<dbReference type="eggNOG" id="COG0162">
    <property type="taxonomic scope" value="Bacteria"/>
</dbReference>
<dbReference type="HOGENOM" id="CLU_024003_0_2_14"/>
<dbReference type="BioCyc" id="OYEL262768:G1G26-554-MONOMER"/>
<dbReference type="Proteomes" id="UP000002523">
    <property type="component" value="Chromosome"/>
</dbReference>
<dbReference type="GO" id="GO:0005829">
    <property type="term" value="C:cytosol"/>
    <property type="evidence" value="ECO:0007669"/>
    <property type="project" value="TreeGrafter"/>
</dbReference>
<dbReference type="GO" id="GO:0005524">
    <property type="term" value="F:ATP binding"/>
    <property type="evidence" value="ECO:0007669"/>
    <property type="project" value="UniProtKB-UniRule"/>
</dbReference>
<dbReference type="GO" id="GO:0003723">
    <property type="term" value="F:RNA binding"/>
    <property type="evidence" value="ECO:0007669"/>
    <property type="project" value="UniProtKB-KW"/>
</dbReference>
<dbReference type="GO" id="GO:0004831">
    <property type="term" value="F:tyrosine-tRNA ligase activity"/>
    <property type="evidence" value="ECO:0007669"/>
    <property type="project" value="UniProtKB-UniRule"/>
</dbReference>
<dbReference type="GO" id="GO:0006437">
    <property type="term" value="P:tyrosyl-tRNA aminoacylation"/>
    <property type="evidence" value="ECO:0007669"/>
    <property type="project" value="UniProtKB-UniRule"/>
</dbReference>
<dbReference type="CDD" id="cd00805">
    <property type="entry name" value="TyrRS_core"/>
    <property type="match status" value="1"/>
</dbReference>
<dbReference type="FunFam" id="1.10.240.10:FF:000001">
    <property type="entry name" value="Tyrosine--tRNA ligase"/>
    <property type="match status" value="1"/>
</dbReference>
<dbReference type="Gene3D" id="3.40.50.620">
    <property type="entry name" value="HUPs"/>
    <property type="match status" value="1"/>
</dbReference>
<dbReference type="Gene3D" id="3.10.290.10">
    <property type="entry name" value="RNA-binding S4 domain"/>
    <property type="match status" value="1"/>
</dbReference>
<dbReference type="Gene3D" id="1.10.240.10">
    <property type="entry name" value="Tyrosyl-Transfer RNA Synthetase"/>
    <property type="match status" value="1"/>
</dbReference>
<dbReference type="HAMAP" id="MF_02006">
    <property type="entry name" value="Tyr_tRNA_synth_type1"/>
    <property type="match status" value="1"/>
</dbReference>
<dbReference type="InterPro" id="IPR002305">
    <property type="entry name" value="aa-tRNA-synth_Ic"/>
</dbReference>
<dbReference type="InterPro" id="IPR014729">
    <property type="entry name" value="Rossmann-like_a/b/a_fold"/>
</dbReference>
<dbReference type="InterPro" id="IPR036986">
    <property type="entry name" value="S4_RNA-bd_sf"/>
</dbReference>
<dbReference type="InterPro" id="IPR054608">
    <property type="entry name" value="SYY-like_C"/>
</dbReference>
<dbReference type="InterPro" id="IPR002307">
    <property type="entry name" value="Tyr-tRNA-ligase"/>
</dbReference>
<dbReference type="InterPro" id="IPR024088">
    <property type="entry name" value="Tyr-tRNA-ligase_bac-type"/>
</dbReference>
<dbReference type="InterPro" id="IPR024107">
    <property type="entry name" value="Tyr-tRNA-ligase_bac_1"/>
</dbReference>
<dbReference type="NCBIfam" id="TIGR00234">
    <property type="entry name" value="tyrS"/>
    <property type="match status" value="1"/>
</dbReference>
<dbReference type="PANTHER" id="PTHR11766:SF0">
    <property type="entry name" value="TYROSINE--TRNA LIGASE, MITOCHONDRIAL"/>
    <property type="match status" value="1"/>
</dbReference>
<dbReference type="PANTHER" id="PTHR11766">
    <property type="entry name" value="TYROSYL-TRNA SYNTHETASE"/>
    <property type="match status" value="1"/>
</dbReference>
<dbReference type="Pfam" id="PF22421">
    <property type="entry name" value="SYY_C-terminal"/>
    <property type="match status" value="1"/>
</dbReference>
<dbReference type="Pfam" id="PF00579">
    <property type="entry name" value="tRNA-synt_1b"/>
    <property type="match status" value="1"/>
</dbReference>
<dbReference type="PRINTS" id="PR01040">
    <property type="entry name" value="TRNASYNTHTYR"/>
</dbReference>
<dbReference type="SUPFAM" id="SSF55174">
    <property type="entry name" value="Alpha-L RNA-binding motif"/>
    <property type="match status" value="1"/>
</dbReference>
<dbReference type="SUPFAM" id="SSF52374">
    <property type="entry name" value="Nucleotidylyl transferase"/>
    <property type="match status" value="1"/>
</dbReference>
<dbReference type="PROSITE" id="PS50889">
    <property type="entry name" value="S4"/>
    <property type="match status" value="1"/>
</dbReference>
<reference key="1">
    <citation type="journal article" date="2004" name="Nat. Genet.">
        <title>Reductive evolution suggested from the complete genome sequence of a plant-pathogenic phytoplasma.</title>
        <authorList>
            <person name="Oshima K."/>
            <person name="Kakizawa S."/>
            <person name="Nishigawa H."/>
            <person name="Jung H.-Y."/>
            <person name="Wei W."/>
            <person name="Suzuki S."/>
            <person name="Arashida R."/>
            <person name="Nakata D."/>
            <person name="Miyata S."/>
            <person name="Ugaki M."/>
            <person name="Namba S."/>
        </authorList>
    </citation>
    <scope>NUCLEOTIDE SEQUENCE [LARGE SCALE GENOMIC DNA]</scope>
    <source>
        <strain>OY-M</strain>
    </source>
</reference>
<name>SYY_ONYPE</name>
<sequence length="413" mass="47449">MSFYEELKWRNLIKDCSNETQVKELLDNNQVKFYCGFDPTSHSLTVGHLVQITMILLMQRQGHLPVILVGGATGLIGDPKETEERKLLSLENSLQNAKSIECQLKNILLNKQVEFVNNYQWLSQIDIISFLRNYGKLFNINYMLSKHAVAKRLASGISFTEFSYMILQSLDFHHLYKNHKVRLQLGGSDQWGNITSGLELIRKLEKKSDALGISTPLLLNSDGTKFGKSEKGVLWVNPSMTSPYEIYQYFLNVSDKEVINYLKMLTLIPKQEILELEKNTLENPQQRLAQKALTQNIITLIHSSDILQECIKTNQILFSNAKKESFQEKDFILLQKTLFCHSTKEDILLVDALVQTKLATSKSEAREFIKDNTIKLFNQKIKSLDFAITKKNTLFDKYVLLKKGKKNNALIVF</sequence>
<keyword id="KW-0030">Aminoacyl-tRNA synthetase</keyword>
<keyword id="KW-0067">ATP-binding</keyword>
<keyword id="KW-0963">Cytoplasm</keyword>
<keyword id="KW-0436">Ligase</keyword>
<keyword id="KW-0547">Nucleotide-binding</keyword>
<keyword id="KW-0648">Protein biosynthesis</keyword>
<keyword id="KW-0694">RNA-binding</keyword>
<comment type="function">
    <text evidence="1">Catalyzes the attachment of tyrosine to tRNA(Tyr) in a two-step reaction: tyrosine is first activated by ATP to form Tyr-AMP and then transferred to the acceptor end of tRNA(Tyr).</text>
</comment>
<comment type="catalytic activity">
    <reaction evidence="1">
        <text>tRNA(Tyr) + L-tyrosine + ATP = L-tyrosyl-tRNA(Tyr) + AMP + diphosphate + H(+)</text>
        <dbReference type="Rhea" id="RHEA:10220"/>
        <dbReference type="Rhea" id="RHEA-COMP:9706"/>
        <dbReference type="Rhea" id="RHEA-COMP:9707"/>
        <dbReference type="ChEBI" id="CHEBI:15378"/>
        <dbReference type="ChEBI" id="CHEBI:30616"/>
        <dbReference type="ChEBI" id="CHEBI:33019"/>
        <dbReference type="ChEBI" id="CHEBI:58315"/>
        <dbReference type="ChEBI" id="CHEBI:78442"/>
        <dbReference type="ChEBI" id="CHEBI:78536"/>
        <dbReference type="ChEBI" id="CHEBI:456215"/>
        <dbReference type="EC" id="6.1.1.1"/>
    </reaction>
</comment>
<comment type="subunit">
    <text evidence="1">Homodimer.</text>
</comment>
<comment type="subcellular location">
    <subcellularLocation>
        <location evidence="1">Cytoplasm</location>
    </subcellularLocation>
</comment>
<comment type="similarity">
    <text evidence="1">Belongs to the class-I aminoacyl-tRNA synthetase family. TyrS type 1 subfamily.</text>
</comment>
<proteinExistence type="inferred from homology"/>
<feature type="chain" id="PRO_0000234746" description="Tyrosine--tRNA ligase">
    <location>
        <begin position="1"/>
        <end position="413"/>
    </location>
</feature>
<feature type="domain" description="S4 RNA-binding" evidence="1">
    <location>
        <begin position="347"/>
        <end position="413"/>
    </location>
</feature>
<feature type="short sequence motif" description="'HIGH' region">
    <location>
        <begin position="39"/>
        <end position="48"/>
    </location>
</feature>
<feature type="short sequence motif" description="'KMSKS' region">
    <location>
        <begin position="225"/>
        <end position="229"/>
    </location>
</feature>
<feature type="binding site" evidence="1">
    <location>
        <position position="34"/>
    </location>
    <ligand>
        <name>L-tyrosine</name>
        <dbReference type="ChEBI" id="CHEBI:58315"/>
    </ligand>
</feature>
<feature type="binding site" evidence="1">
    <location>
        <position position="164"/>
    </location>
    <ligand>
        <name>L-tyrosine</name>
        <dbReference type="ChEBI" id="CHEBI:58315"/>
    </ligand>
</feature>
<feature type="binding site" evidence="1">
    <location>
        <position position="168"/>
    </location>
    <ligand>
        <name>L-tyrosine</name>
        <dbReference type="ChEBI" id="CHEBI:58315"/>
    </ligand>
</feature>
<feature type="binding site" evidence="1">
    <location>
        <position position="228"/>
    </location>
    <ligand>
        <name>ATP</name>
        <dbReference type="ChEBI" id="CHEBI:30616"/>
    </ligand>
</feature>
<protein>
    <recommendedName>
        <fullName evidence="1">Tyrosine--tRNA ligase</fullName>
        <ecNumber evidence="1">6.1.1.1</ecNumber>
    </recommendedName>
    <alternativeName>
        <fullName evidence="1">Tyrosyl-tRNA synthetase</fullName>
        <shortName evidence="1">TyrRS</shortName>
    </alternativeName>
</protein>
<accession>Q6YQA6</accession>
<gene>
    <name evidence="1" type="primary">tyrS</name>
    <name type="ordered locus">PAM_469</name>
</gene>
<evidence type="ECO:0000255" key="1">
    <source>
        <dbReference type="HAMAP-Rule" id="MF_02006"/>
    </source>
</evidence>
<organism>
    <name type="scientific">Onion yellows phytoplasma (strain OY-M)</name>
    <dbReference type="NCBI Taxonomy" id="262768"/>
    <lineage>
        <taxon>Bacteria</taxon>
        <taxon>Bacillati</taxon>
        <taxon>Mycoplasmatota</taxon>
        <taxon>Mollicutes</taxon>
        <taxon>Acholeplasmatales</taxon>
        <taxon>Acholeplasmataceae</taxon>
        <taxon>Candidatus Phytoplasma</taxon>
        <taxon>16SrI (Aster yellows group)</taxon>
    </lineage>
</organism>